<sequence length="271" mass="28712">MLLSSPTTPSRGRTPSAVERLEADKAKYVKTHQVIVRRQEPALRGGPGPLTPHPCNELGASASPRTPGPARRGSGRRQPRPDSLIFYRQKRDCKASVNKENAKGQGLVRRLFLGATRDAAPSSPAPTERPGAPAGWAGSPDTPEATGKRAVCPTCSLPLSEKERFFNYCGLERALVEVLGAERFSPQSWGAEHGPQVATSPPPGSGDTSDWTSSDRDAGSPDCAGGGGGSEAAGSARDGRPTVSVVERNARVIQWLYGCQRARAPPRESEV</sequence>
<dbReference type="EMBL" id="AL627314">
    <property type="status" value="NOT_ANNOTATED_CDS"/>
    <property type="molecule type" value="Genomic_DNA"/>
</dbReference>
<dbReference type="EMBL" id="BC048704">
    <property type="protein sequence ID" value="AAH48704.2"/>
    <property type="molecule type" value="mRNA"/>
</dbReference>
<dbReference type="CCDS" id="CCDS38913.1"/>
<dbReference type="RefSeq" id="NP_001092766.1">
    <property type="nucleotide sequence ID" value="NM_001099296.2"/>
</dbReference>
<dbReference type="RefSeq" id="XP_006539261.1">
    <property type="nucleotide sequence ID" value="XM_006539198.4"/>
</dbReference>
<dbReference type="RefSeq" id="XP_006539262.1">
    <property type="nucleotide sequence ID" value="XM_006539199.3"/>
</dbReference>
<dbReference type="RefSeq" id="XP_006539263.1">
    <property type="nucleotide sequence ID" value="XM_006539200.3"/>
</dbReference>
<dbReference type="RefSeq" id="XP_036020357.1">
    <property type="nucleotide sequence ID" value="XM_036164464.1"/>
</dbReference>
<dbReference type="RefSeq" id="XP_036020358.1">
    <property type="nucleotide sequence ID" value="XM_036164465.1"/>
</dbReference>
<dbReference type="FunCoup" id="Q80X91">
    <property type="interactions" value="2"/>
</dbReference>
<dbReference type="STRING" id="10090.ENSMUSP00000060143"/>
<dbReference type="GlyGen" id="Q80X91">
    <property type="glycosylation" value="2 sites"/>
</dbReference>
<dbReference type="iPTMnet" id="Q80X91"/>
<dbReference type="PhosphoSitePlus" id="Q80X91"/>
<dbReference type="PaxDb" id="10090-ENSMUSP00000060143"/>
<dbReference type="Antibodypedia" id="2884">
    <property type="antibodies" value="71 antibodies from 15 providers"/>
</dbReference>
<dbReference type="Ensembl" id="ENSMUST00000060050.6">
    <property type="protein sequence ID" value="ENSMUSP00000060143.6"/>
    <property type="gene ID" value="ENSMUSG00000050105.6"/>
</dbReference>
<dbReference type="GeneID" id="72690"/>
<dbReference type="KEGG" id="mmu:72690"/>
<dbReference type="UCSC" id="uc008veo.1">
    <property type="organism name" value="mouse"/>
</dbReference>
<dbReference type="AGR" id="MGI:1919940"/>
<dbReference type="CTD" id="79927"/>
<dbReference type="MGI" id="MGI:1919940">
    <property type="gene designation" value="Fam110d"/>
</dbReference>
<dbReference type="VEuPathDB" id="HostDB:ENSMUSG00000050105"/>
<dbReference type="eggNOG" id="ENOG502S0DB">
    <property type="taxonomic scope" value="Eukaryota"/>
</dbReference>
<dbReference type="GeneTree" id="ENSGT00950000183056"/>
<dbReference type="HOGENOM" id="CLU_050540_1_0_1"/>
<dbReference type="InParanoid" id="Q80X91"/>
<dbReference type="OMA" id="YGCQRAW"/>
<dbReference type="OrthoDB" id="10028183at2759"/>
<dbReference type="PhylomeDB" id="Q80X91"/>
<dbReference type="TreeFam" id="TF330964"/>
<dbReference type="BioGRID-ORCS" id="72690">
    <property type="hits" value="1 hit in 78 CRISPR screens"/>
</dbReference>
<dbReference type="ChiTaRS" id="Grrp1">
    <property type="organism name" value="mouse"/>
</dbReference>
<dbReference type="PRO" id="PR:Q80X91"/>
<dbReference type="Proteomes" id="UP000000589">
    <property type="component" value="Chromosome 4"/>
</dbReference>
<dbReference type="RNAct" id="Q80X91">
    <property type="molecule type" value="protein"/>
</dbReference>
<dbReference type="Bgee" id="ENSMUSG00000050105">
    <property type="expression patterns" value="Expressed in mesodermal cell in embryo and 148 other cell types or tissues"/>
</dbReference>
<dbReference type="InterPro" id="IPR025740">
    <property type="entry name" value="FAM110"/>
</dbReference>
<dbReference type="InterPro" id="IPR025741">
    <property type="entry name" value="FAM110_C"/>
</dbReference>
<dbReference type="InterPro" id="IPR025739">
    <property type="entry name" value="FAM110_N"/>
</dbReference>
<dbReference type="PANTHER" id="PTHR14758">
    <property type="entry name" value="AGAP005440-PA"/>
    <property type="match status" value="1"/>
</dbReference>
<dbReference type="PANTHER" id="PTHR14758:SF3">
    <property type="entry name" value="PROTEIN FAM110D"/>
    <property type="match status" value="1"/>
</dbReference>
<dbReference type="Pfam" id="PF14160">
    <property type="entry name" value="FAM110_C"/>
    <property type="match status" value="1"/>
</dbReference>
<dbReference type="Pfam" id="PF14161">
    <property type="entry name" value="FAM110_N"/>
    <property type="match status" value="1"/>
</dbReference>
<keyword id="KW-1185">Reference proteome</keyword>
<protein>
    <recommendedName>
        <fullName>Protein FAM110D</fullName>
    </recommendedName>
</protein>
<evidence type="ECO:0000256" key="1">
    <source>
        <dbReference type="SAM" id="MobiDB-lite"/>
    </source>
</evidence>
<evidence type="ECO:0000305" key="2"/>
<evidence type="ECO:0000312" key="3">
    <source>
        <dbReference type="MGI" id="MGI:1919940"/>
    </source>
</evidence>
<accession>Q80X91</accession>
<feature type="chain" id="PRO_0000318717" description="Protein FAM110D">
    <location>
        <begin position="1"/>
        <end position="271"/>
    </location>
</feature>
<feature type="region of interest" description="Disordered" evidence="1">
    <location>
        <begin position="1"/>
        <end position="84"/>
    </location>
</feature>
<feature type="region of interest" description="Disordered" evidence="1">
    <location>
        <begin position="118"/>
        <end position="149"/>
    </location>
</feature>
<feature type="region of interest" description="Disordered" evidence="1">
    <location>
        <begin position="186"/>
        <end position="242"/>
    </location>
</feature>
<feature type="compositionally biased region" description="Polar residues" evidence="1">
    <location>
        <begin position="1"/>
        <end position="13"/>
    </location>
</feature>
<gene>
    <name evidence="3" type="primary">Fam110d</name>
    <name evidence="3" type="synonym">Grrp1</name>
</gene>
<name>F110D_MOUSE</name>
<proteinExistence type="evidence at transcript level"/>
<comment type="similarity">
    <text evidence="2">Belongs to the FAM110 family.</text>
</comment>
<organism>
    <name type="scientific">Mus musculus</name>
    <name type="common">Mouse</name>
    <dbReference type="NCBI Taxonomy" id="10090"/>
    <lineage>
        <taxon>Eukaryota</taxon>
        <taxon>Metazoa</taxon>
        <taxon>Chordata</taxon>
        <taxon>Craniata</taxon>
        <taxon>Vertebrata</taxon>
        <taxon>Euteleostomi</taxon>
        <taxon>Mammalia</taxon>
        <taxon>Eutheria</taxon>
        <taxon>Euarchontoglires</taxon>
        <taxon>Glires</taxon>
        <taxon>Rodentia</taxon>
        <taxon>Myomorpha</taxon>
        <taxon>Muroidea</taxon>
        <taxon>Muridae</taxon>
        <taxon>Murinae</taxon>
        <taxon>Mus</taxon>
        <taxon>Mus</taxon>
    </lineage>
</organism>
<reference key="1">
    <citation type="journal article" date="2009" name="PLoS Biol.">
        <title>Lineage-specific biology revealed by a finished genome assembly of the mouse.</title>
        <authorList>
            <person name="Church D.M."/>
            <person name="Goodstadt L."/>
            <person name="Hillier L.W."/>
            <person name="Zody M.C."/>
            <person name="Goldstein S."/>
            <person name="She X."/>
            <person name="Bult C.J."/>
            <person name="Agarwala R."/>
            <person name="Cherry J.L."/>
            <person name="DiCuccio M."/>
            <person name="Hlavina W."/>
            <person name="Kapustin Y."/>
            <person name="Meric P."/>
            <person name="Maglott D."/>
            <person name="Birtle Z."/>
            <person name="Marques A.C."/>
            <person name="Graves T."/>
            <person name="Zhou S."/>
            <person name="Teague B."/>
            <person name="Potamousis K."/>
            <person name="Churas C."/>
            <person name="Place M."/>
            <person name="Herschleb J."/>
            <person name="Runnheim R."/>
            <person name="Forrest D."/>
            <person name="Amos-Landgraf J."/>
            <person name="Schwartz D.C."/>
            <person name="Cheng Z."/>
            <person name="Lindblad-Toh K."/>
            <person name="Eichler E.E."/>
            <person name="Ponting C.P."/>
        </authorList>
    </citation>
    <scope>NUCLEOTIDE SEQUENCE [LARGE SCALE GENOMIC DNA]</scope>
    <source>
        <strain>C57BL/6J</strain>
    </source>
</reference>
<reference key="2">
    <citation type="journal article" date="2004" name="Genome Res.">
        <title>The status, quality, and expansion of the NIH full-length cDNA project: the Mammalian Gene Collection (MGC).</title>
        <authorList>
            <consortium name="The MGC Project Team"/>
        </authorList>
    </citation>
    <scope>NUCLEOTIDE SEQUENCE [LARGE SCALE MRNA]</scope>
    <source>
        <tissue>Embryo</tissue>
    </source>
</reference>